<protein>
    <recommendedName>
        <fullName evidence="1">ATP-dependent 6-phosphofructokinase</fullName>
        <shortName evidence="1">ATP-PFK</shortName>
        <shortName evidence="1">Phosphofructokinase</shortName>
        <ecNumber evidence="1">2.7.1.11</ecNumber>
    </recommendedName>
    <alternativeName>
        <fullName evidence="1">Phosphohexokinase</fullName>
    </alternativeName>
</protein>
<proteinExistence type="inferred from homology"/>
<accession>Q5PIR6</accession>
<evidence type="ECO:0000255" key="1">
    <source>
        <dbReference type="HAMAP-Rule" id="MF_00339"/>
    </source>
</evidence>
<name>PFKA_SALPA</name>
<keyword id="KW-0021">Allosteric enzyme</keyword>
<keyword id="KW-0067">ATP-binding</keyword>
<keyword id="KW-0963">Cytoplasm</keyword>
<keyword id="KW-0324">Glycolysis</keyword>
<keyword id="KW-0418">Kinase</keyword>
<keyword id="KW-0460">Magnesium</keyword>
<keyword id="KW-0479">Metal-binding</keyword>
<keyword id="KW-0547">Nucleotide-binding</keyword>
<keyword id="KW-0808">Transferase</keyword>
<sequence>MIKKIGVLTSGGDAPGMNAAIRGVVRAALTEGLEVMGIYDGYLGLYEDRMVQLDRYSVSDMINRGGTFLGSARFPEFRDENIRAVAIENLKKRGIDALVVIGGDGSYMGAKRLTEMGFPCIGLPGTIDNDIKGTDYTIGYFTALGTVVEAIDRLRDTSSSHQRISIVEVMGRYCGDLTLAAAIAGGCEFIVVPEVEFNREDLVAEIKAGIAKGKKHAIVAITEHMCDVDELAHFIEKETGRETRATVLGHIQRGGSPVPYDRILASRMGAYAIDLLLEGHGGRCVGIQNEQLVHHDIIDAIENMKRPFKSDWMECAKKLY</sequence>
<gene>
    <name evidence="1" type="primary">pfkA</name>
    <name type="ordered locus">SPA3905</name>
</gene>
<feature type="chain" id="PRO_1000059786" description="ATP-dependent 6-phosphofructokinase">
    <location>
        <begin position="1"/>
        <end position="320"/>
    </location>
</feature>
<feature type="active site" description="Proton acceptor" evidence="1">
    <location>
        <position position="128"/>
    </location>
</feature>
<feature type="binding site" evidence="1">
    <location>
        <position position="12"/>
    </location>
    <ligand>
        <name>ATP</name>
        <dbReference type="ChEBI" id="CHEBI:30616"/>
    </ligand>
</feature>
<feature type="binding site" evidence="1">
    <location>
        <begin position="22"/>
        <end position="26"/>
    </location>
    <ligand>
        <name>ADP</name>
        <dbReference type="ChEBI" id="CHEBI:456216"/>
        <note>allosteric activator; ligand shared between dimeric partners</note>
    </ligand>
</feature>
<feature type="binding site" evidence="1">
    <location>
        <begin position="55"/>
        <end position="60"/>
    </location>
    <ligand>
        <name>ADP</name>
        <dbReference type="ChEBI" id="CHEBI:456216"/>
        <note>allosteric activator; ligand shared between dimeric partners</note>
    </ligand>
</feature>
<feature type="binding site" evidence="1">
    <location>
        <begin position="73"/>
        <end position="74"/>
    </location>
    <ligand>
        <name>ATP</name>
        <dbReference type="ChEBI" id="CHEBI:30616"/>
    </ligand>
</feature>
<feature type="binding site" evidence="1">
    <location>
        <begin position="103"/>
        <end position="106"/>
    </location>
    <ligand>
        <name>ATP</name>
        <dbReference type="ChEBI" id="CHEBI:30616"/>
    </ligand>
</feature>
<feature type="binding site" evidence="1">
    <location>
        <position position="104"/>
    </location>
    <ligand>
        <name>Mg(2+)</name>
        <dbReference type="ChEBI" id="CHEBI:18420"/>
        <note>catalytic</note>
    </ligand>
</feature>
<feature type="binding site" description="in other chain" evidence="1">
    <location>
        <begin position="126"/>
        <end position="128"/>
    </location>
    <ligand>
        <name>substrate</name>
        <note>ligand shared between dimeric partners</note>
    </ligand>
</feature>
<feature type="binding site" description="in other chain" evidence="1">
    <location>
        <position position="155"/>
    </location>
    <ligand>
        <name>ADP</name>
        <dbReference type="ChEBI" id="CHEBI:456216"/>
        <note>allosteric activator; ligand shared between dimeric partners</note>
    </ligand>
</feature>
<feature type="binding site" evidence="1">
    <location>
        <position position="163"/>
    </location>
    <ligand>
        <name>substrate</name>
        <note>ligand shared between dimeric partners</note>
    </ligand>
</feature>
<feature type="binding site" description="in other chain" evidence="1">
    <location>
        <begin position="170"/>
        <end position="172"/>
    </location>
    <ligand>
        <name>substrate</name>
        <note>ligand shared between dimeric partners</note>
    </ligand>
</feature>
<feature type="binding site" description="in other chain" evidence="1">
    <location>
        <begin position="186"/>
        <end position="188"/>
    </location>
    <ligand>
        <name>ADP</name>
        <dbReference type="ChEBI" id="CHEBI:456216"/>
        <note>allosteric activator; ligand shared between dimeric partners</note>
    </ligand>
</feature>
<feature type="binding site" description="in other chain" evidence="1">
    <location>
        <position position="212"/>
    </location>
    <ligand>
        <name>ADP</name>
        <dbReference type="ChEBI" id="CHEBI:456216"/>
        <note>allosteric activator; ligand shared between dimeric partners</note>
    </ligand>
</feature>
<feature type="binding site" description="in other chain" evidence="1">
    <location>
        <begin position="214"/>
        <end position="216"/>
    </location>
    <ligand>
        <name>ADP</name>
        <dbReference type="ChEBI" id="CHEBI:456216"/>
        <note>allosteric activator; ligand shared between dimeric partners</note>
    </ligand>
</feature>
<feature type="binding site" description="in other chain" evidence="1">
    <location>
        <position position="223"/>
    </location>
    <ligand>
        <name>substrate</name>
        <note>ligand shared between dimeric partners</note>
    </ligand>
</feature>
<feature type="binding site" evidence="1">
    <location>
        <position position="244"/>
    </location>
    <ligand>
        <name>substrate</name>
        <note>ligand shared between dimeric partners</note>
    </ligand>
</feature>
<feature type="binding site" description="in other chain" evidence="1">
    <location>
        <begin position="250"/>
        <end position="253"/>
    </location>
    <ligand>
        <name>substrate</name>
        <note>ligand shared between dimeric partners</note>
    </ligand>
</feature>
<dbReference type="EC" id="2.7.1.11" evidence="1"/>
<dbReference type="EMBL" id="CP000026">
    <property type="protein sequence ID" value="AAV79671.1"/>
    <property type="molecule type" value="Genomic_DNA"/>
</dbReference>
<dbReference type="RefSeq" id="WP_000591793.1">
    <property type="nucleotide sequence ID" value="NC_006511.1"/>
</dbReference>
<dbReference type="SMR" id="Q5PIR6"/>
<dbReference type="GeneID" id="66758327"/>
<dbReference type="KEGG" id="spt:SPA3905"/>
<dbReference type="HOGENOM" id="CLU_020655_0_1_6"/>
<dbReference type="UniPathway" id="UPA00109">
    <property type="reaction ID" value="UER00182"/>
</dbReference>
<dbReference type="Proteomes" id="UP000008185">
    <property type="component" value="Chromosome"/>
</dbReference>
<dbReference type="GO" id="GO:0005945">
    <property type="term" value="C:6-phosphofructokinase complex"/>
    <property type="evidence" value="ECO:0007669"/>
    <property type="project" value="TreeGrafter"/>
</dbReference>
<dbReference type="GO" id="GO:0003872">
    <property type="term" value="F:6-phosphofructokinase activity"/>
    <property type="evidence" value="ECO:0007669"/>
    <property type="project" value="UniProtKB-UniRule"/>
</dbReference>
<dbReference type="GO" id="GO:0016208">
    <property type="term" value="F:AMP binding"/>
    <property type="evidence" value="ECO:0007669"/>
    <property type="project" value="TreeGrafter"/>
</dbReference>
<dbReference type="GO" id="GO:0005524">
    <property type="term" value="F:ATP binding"/>
    <property type="evidence" value="ECO:0007669"/>
    <property type="project" value="UniProtKB-KW"/>
</dbReference>
<dbReference type="GO" id="GO:0070095">
    <property type="term" value="F:fructose-6-phosphate binding"/>
    <property type="evidence" value="ECO:0007669"/>
    <property type="project" value="TreeGrafter"/>
</dbReference>
<dbReference type="GO" id="GO:0042802">
    <property type="term" value="F:identical protein binding"/>
    <property type="evidence" value="ECO:0007669"/>
    <property type="project" value="TreeGrafter"/>
</dbReference>
<dbReference type="GO" id="GO:0046872">
    <property type="term" value="F:metal ion binding"/>
    <property type="evidence" value="ECO:0007669"/>
    <property type="project" value="UniProtKB-KW"/>
</dbReference>
<dbReference type="GO" id="GO:0048029">
    <property type="term" value="F:monosaccharide binding"/>
    <property type="evidence" value="ECO:0007669"/>
    <property type="project" value="TreeGrafter"/>
</dbReference>
<dbReference type="GO" id="GO:0061621">
    <property type="term" value="P:canonical glycolysis"/>
    <property type="evidence" value="ECO:0007669"/>
    <property type="project" value="TreeGrafter"/>
</dbReference>
<dbReference type="GO" id="GO:0030388">
    <property type="term" value="P:fructose 1,6-bisphosphate metabolic process"/>
    <property type="evidence" value="ECO:0007669"/>
    <property type="project" value="TreeGrafter"/>
</dbReference>
<dbReference type="GO" id="GO:0006002">
    <property type="term" value="P:fructose 6-phosphate metabolic process"/>
    <property type="evidence" value="ECO:0007669"/>
    <property type="project" value="InterPro"/>
</dbReference>
<dbReference type="CDD" id="cd00763">
    <property type="entry name" value="Bacterial_PFK"/>
    <property type="match status" value="1"/>
</dbReference>
<dbReference type="FunFam" id="3.40.50.450:FF:000001">
    <property type="entry name" value="ATP-dependent 6-phosphofructokinase"/>
    <property type="match status" value="1"/>
</dbReference>
<dbReference type="FunFam" id="3.40.50.460:FF:000002">
    <property type="entry name" value="ATP-dependent 6-phosphofructokinase"/>
    <property type="match status" value="1"/>
</dbReference>
<dbReference type="Gene3D" id="3.40.50.450">
    <property type="match status" value="1"/>
</dbReference>
<dbReference type="Gene3D" id="3.40.50.460">
    <property type="entry name" value="Phosphofructokinase domain"/>
    <property type="match status" value="1"/>
</dbReference>
<dbReference type="HAMAP" id="MF_00339">
    <property type="entry name" value="Phosphofructokinase_I_B1"/>
    <property type="match status" value="1"/>
</dbReference>
<dbReference type="InterPro" id="IPR022953">
    <property type="entry name" value="ATP_PFK"/>
</dbReference>
<dbReference type="InterPro" id="IPR012003">
    <property type="entry name" value="ATP_PFK_prok-type"/>
</dbReference>
<dbReference type="InterPro" id="IPR012828">
    <property type="entry name" value="PFKA_ATP_prok"/>
</dbReference>
<dbReference type="InterPro" id="IPR015912">
    <property type="entry name" value="Phosphofructokinase_CS"/>
</dbReference>
<dbReference type="InterPro" id="IPR000023">
    <property type="entry name" value="Phosphofructokinase_dom"/>
</dbReference>
<dbReference type="InterPro" id="IPR035966">
    <property type="entry name" value="PKF_sf"/>
</dbReference>
<dbReference type="NCBIfam" id="TIGR02482">
    <property type="entry name" value="PFKA_ATP"/>
    <property type="match status" value="1"/>
</dbReference>
<dbReference type="NCBIfam" id="NF002872">
    <property type="entry name" value="PRK03202.1"/>
    <property type="match status" value="1"/>
</dbReference>
<dbReference type="PANTHER" id="PTHR13697:SF4">
    <property type="entry name" value="ATP-DEPENDENT 6-PHOSPHOFRUCTOKINASE"/>
    <property type="match status" value="1"/>
</dbReference>
<dbReference type="PANTHER" id="PTHR13697">
    <property type="entry name" value="PHOSPHOFRUCTOKINASE"/>
    <property type="match status" value="1"/>
</dbReference>
<dbReference type="Pfam" id="PF00365">
    <property type="entry name" value="PFK"/>
    <property type="match status" value="1"/>
</dbReference>
<dbReference type="PIRSF" id="PIRSF000532">
    <property type="entry name" value="ATP_PFK_prok"/>
    <property type="match status" value="1"/>
</dbReference>
<dbReference type="PRINTS" id="PR00476">
    <property type="entry name" value="PHFRCTKINASE"/>
</dbReference>
<dbReference type="SUPFAM" id="SSF53784">
    <property type="entry name" value="Phosphofructokinase"/>
    <property type="match status" value="1"/>
</dbReference>
<dbReference type="PROSITE" id="PS00433">
    <property type="entry name" value="PHOSPHOFRUCTOKINASE"/>
    <property type="match status" value="1"/>
</dbReference>
<reference key="1">
    <citation type="journal article" date="2004" name="Nat. Genet.">
        <title>Comparison of genome degradation in Paratyphi A and Typhi, human-restricted serovars of Salmonella enterica that cause typhoid.</title>
        <authorList>
            <person name="McClelland M."/>
            <person name="Sanderson K.E."/>
            <person name="Clifton S.W."/>
            <person name="Latreille P."/>
            <person name="Porwollik S."/>
            <person name="Sabo A."/>
            <person name="Meyer R."/>
            <person name="Bieri T."/>
            <person name="Ozersky P."/>
            <person name="McLellan M."/>
            <person name="Harkins C.R."/>
            <person name="Wang C."/>
            <person name="Nguyen C."/>
            <person name="Berghoff A."/>
            <person name="Elliott G."/>
            <person name="Kohlberg S."/>
            <person name="Strong C."/>
            <person name="Du F."/>
            <person name="Carter J."/>
            <person name="Kremizki C."/>
            <person name="Layman D."/>
            <person name="Leonard S."/>
            <person name="Sun H."/>
            <person name="Fulton L."/>
            <person name="Nash W."/>
            <person name="Miner T."/>
            <person name="Minx P."/>
            <person name="Delehaunty K."/>
            <person name="Fronick C."/>
            <person name="Magrini V."/>
            <person name="Nhan M."/>
            <person name="Warren W."/>
            <person name="Florea L."/>
            <person name="Spieth J."/>
            <person name="Wilson R.K."/>
        </authorList>
    </citation>
    <scope>NUCLEOTIDE SEQUENCE [LARGE SCALE GENOMIC DNA]</scope>
    <source>
        <strain>ATCC 9150 / SARB42</strain>
    </source>
</reference>
<comment type="function">
    <text evidence="1">Catalyzes the phosphorylation of D-fructose 6-phosphate to fructose 1,6-bisphosphate by ATP, the first committing step of glycolysis.</text>
</comment>
<comment type="catalytic activity">
    <reaction evidence="1">
        <text>beta-D-fructose 6-phosphate + ATP = beta-D-fructose 1,6-bisphosphate + ADP + H(+)</text>
        <dbReference type="Rhea" id="RHEA:16109"/>
        <dbReference type="ChEBI" id="CHEBI:15378"/>
        <dbReference type="ChEBI" id="CHEBI:30616"/>
        <dbReference type="ChEBI" id="CHEBI:32966"/>
        <dbReference type="ChEBI" id="CHEBI:57634"/>
        <dbReference type="ChEBI" id="CHEBI:456216"/>
        <dbReference type="EC" id="2.7.1.11"/>
    </reaction>
</comment>
<comment type="cofactor">
    <cofactor evidence="1">
        <name>Mg(2+)</name>
        <dbReference type="ChEBI" id="CHEBI:18420"/>
    </cofactor>
</comment>
<comment type="activity regulation">
    <text evidence="1">Allosterically activated by ADP and other diphosphonucleosides, and allosterically inhibited by phosphoenolpyruvate.</text>
</comment>
<comment type="pathway">
    <text evidence="1">Carbohydrate degradation; glycolysis; D-glyceraldehyde 3-phosphate and glycerone phosphate from D-glucose: step 3/4.</text>
</comment>
<comment type="subunit">
    <text evidence="1">Homotetramer.</text>
</comment>
<comment type="subcellular location">
    <subcellularLocation>
        <location evidence="1">Cytoplasm</location>
    </subcellularLocation>
</comment>
<comment type="similarity">
    <text evidence="1">Belongs to the phosphofructokinase type A (PFKA) family. ATP-dependent PFK group I subfamily. Prokaryotic clade 'B1' sub-subfamily.</text>
</comment>
<organism>
    <name type="scientific">Salmonella paratyphi A (strain ATCC 9150 / SARB42)</name>
    <dbReference type="NCBI Taxonomy" id="295319"/>
    <lineage>
        <taxon>Bacteria</taxon>
        <taxon>Pseudomonadati</taxon>
        <taxon>Pseudomonadota</taxon>
        <taxon>Gammaproteobacteria</taxon>
        <taxon>Enterobacterales</taxon>
        <taxon>Enterobacteriaceae</taxon>
        <taxon>Salmonella</taxon>
    </lineage>
</organism>